<dbReference type="EC" id="4.1.1.39" evidence="1"/>
<dbReference type="EMBL" id="X52503">
    <property type="protein sequence ID" value="CAA36743.1"/>
    <property type="molecule type" value="Genomic_DNA"/>
</dbReference>
<dbReference type="PIR" id="S13123">
    <property type="entry name" value="RKPFLE"/>
</dbReference>
<dbReference type="SMR" id="P24313"/>
<dbReference type="eggNOG" id="ENOG502QTI9">
    <property type="taxonomic scope" value="Eukaryota"/>
</dbReference>
<dbReference type="GO" id="GO:0009507">
    <property type="term" value="C:chloroplast"/>
    <property type="evidence" value="ECO:0007669"/>
    <property type="project" value="UniProtKB-SubCell"/>
</dbReference>
<dbReference type="GO" id="GO:0000287">
    <property type="term" value="F:magnesium ion binding"/>
    <property type="evidence" value="ECO:0007669"/>
    <property type="project" value="UniProtKB-UniRule"/>
</dbReference>
<dbReference type="GO" id="GO:0004497">
    <property type="term" value="F:monooxygenase activity"/>
    <property type="evidence" value="ECO:0007669"/>
    <property type="project" value="UniProtKB-KW"/>
</dbReference>
<dbReference type="GO" id="GO:0016984">
    <property type="term" value="F:ribulose-bisphosphate carboxylase activity"/>
    <property type="evidence" value="ECO:0007669"/>
    <property type="project" value="UniProtKB-UniRule"/>
</dbReference>
<dbReference type="GO" id="GO:0019253">
    <property type="term" value="P:reductive pentose-phosphate cycle"/>
    <property type="evidence" value="ECO:0007669"/>
    <property type="project" value="UniProtKB-UniRule"/>
</dbReference>
<dbReference type="CDD" id="cd08212">
    <property type="entry name" value="RuBisCO_large_I"/>
    <property type="match status" value="1"/>
</dbReference>
<dbReference type="Gene3D" id="3.20.20.110">
    <property type="entry name" value="Ribulose bisphosphate carboxylase, large subunit, C-terminal domain"/>
    <property type="match status" value="1"/>
</dbReference>
<dbReference type="Gene3D" id="3.30.70.150">
    <property type="entry name" value="RuBisCO large subunit, N-terminal domain"/>
    <property type="match status" value="1"/>
</dbReference>
<dbReference type="HAMAP" id="MF_01338">
    <property type="entry name" value="RuBisCO_L_type1"/>
    <property type="match status" value="1"/>
</dbReference>
<dbReference type="InterPro" id="IPR033966">
    <property type="entry name" value="RuBisCO"/>
</dbReference>
<dbReference type="InterPro" id="IPR020878">
    <property type="entry name" value="RuBisCo_large_chain_AS"/>
</dbReference>
<dbReference type="InterPro" id="IPR000685">
    <property type="entry name" value="RuBisCO_lsu_C"/>
</dbReference>
<dbReference type="InterPro" id="IPR036376">
    <property type="entry name" value="RuBisCO_lsu_C_sf"/>
</dbReference>
<dbReference type="InterPro" id="IPR017443">
    <property type="entry name" value="RuBisCO_lsu_fd_N"/>
</dbReference>
<dbReference type="InterPro" id="IPR036422">
    <property type="entry name" value="RuBisCO_lsu_N_sf"/>
</dbReference>
<dbReference type="InterPro" id="IPR020888">
    <property type="entry name" value="RuBisCO_lsuI"/>
</dbReference>
<dbReference type="NCBIfam" id="NF003252">
    <property type="entry name" value="PRK04208.1"/>
    <property type="match status" value="1"/>
</dbReference>
<dbReference type="PANTHER" id="PTHR42704">
    <property type="entry name" value="RIBULOSE BISPHOSPHATE CARBOXYLASE"/>
    <property type="match status" value="1"/>
</dbReference>
<dbReference type="PANTHER" id="PTHR42704:SF17">
    <property type="entry name" value="RIBULOSE BISPHOSPHATE CARBOXYLASE LARGE CHAIN"/>
    <property type="match status" value="1"/>
</dbReference>
<dbReference type="Pfam" id="PF00016">
    <property type="entry name" value="RuBisCO_large"/>
    <property type="match status" value="1"/>
</dbReference>
<dbReference type="Pfam" id="PF02788">
    <property type="entry name" value="RuBisCO_large_N"/>
    <property type="match status" value="1"/>
</dbReference>
<dbReference type="SFLD" id="SFLDG01052">
    <property type="entry name" value="RuBisCO"/>
    <property type="match status" value="1"/>
</dbReference>
<dbReference type="SFLD" id="SFLDS00014">
    <property type="entry name" value="RuBisCO"/>
    <property type="match status" value="1"/>
</dbReference>
<dbReference type="SFLD" id="SFLDG00301">
    <property type="entry name" value="RuBisCO-like_proteins"/>
    <property type="match status" value="1"/>
</dbReference>
<dbReference type="SUPFAM" id="SSF51649">
    <property type="entry name" value="RuBisCo, C-terminal domain"/>
    <property type="match status" value="1"/>
</dbReference>
<dbReference type="SUPFAM" id="SSF54966">
    <property type="entry name" value="RuBisCO, large subunit, small (N-terminal) domain"/>
    <property type="match status" value="1"/>
</dbReference>
<dbReference type="PROSITE" id="PS00157">
    <property type="entry name" value="RUBISCO_LARGE"/>
    <property type="match status" value="1"/>
</dbReference>
<feature type="chain" id="PRO_0000062455" description="Ribulose bisphosphate carboxylase large chain">
    <location>
        <begin position="1"/>
        <end position="488"/>
    </location>
</feature>
<feature type="active site" description="Proton acceptor" evidence="1">
    <location>
        <position position="179"/>
    </location>
</feature>
<feature type="active site" description="Proton acceptor" evidence="1">
    <location>
        <position position="297"/>
    </location>
</feature>
<feature type="binding site" description="in homodimeric partner" evidence="1">
    <location>
        <position position="127"/>
    </location>
    <ligand>
        <name>substrate</name>
    </ligand>
</feature>
<feature type="binding site" evidence="1">
    <location>
        <position position="177"/>
    </location>
    <ligand>
        <name>substrate</name>
    </ligand>
</feature>
<feature type="binding site" evidence="1">
    <location>
        <position position="181"/>
    </location>
    <ligand>
        <name>substrate</name>
    </ligand>
</feature>
<feature type="binding site" description="via carbamate group" evidence="1">
    <location>
        <position position="205"/>
    </location>
    <ligand>
        <name>Mg(2+)</name>
        <dbReference type="ChEBI" id="CHEBI:18420"/>
    </ligand>
</feature>
<feature type="binding site" evidence="1">
    <location>
        <position position="207"/>
    </location>
    <ligand>
        <name>Mg(2+)</name>
        <dbReference type="ChEBI" id="CHEBI:18420"/>
    </ligand>
</feature>
<feature type="binding site" evidence="1">
    <location>
        <position position="208"/>
    </location>
    <ligand>
        <name>Mg(2+)</name>
        <dbReference type="ChEBI" id="CHEBI:18420"/>
    </ligand>
</feature>
<feature type="binding site" evidence="1">
    <location>
        <position position="298"/>
    </location>
    <ligand>
        <name>substrate</name>
    </ligand>
</feature>
<feature type="binding site" evidence="1">
    <location>
        <position position="330"/>
    </location>
    <ligand>
        <name>substrate</name>
    </ligand>
</feature>
<feature type="binding site" evidence="1">
    <location>
        <position position="382"/>
    </location>
    <ligand>
        <name>substrate</name>
    </ligand>
</feature>
<feature type="site" description="Transition state stabilizer" evidence="1">
    <location>
        <position position="337"/>
    </location>
</feature>
<feature type="modified residue" description="N6-carboxylysine" evidence="1">
    <location>
        <position position="205"/>
    </location>
</feature>
<accession>P24313</accession>
<sequence length="488" mass="53905">MPEDVQNRTRIKSERYESGVIPYAKMGYWDADYKLKDTDILALFRITPQPGVDPVEAAAAVAGESSTATWTVVWTDLLTACDIYRAKAYRVDPVPGTSDQFFAYIAYECDLFEEGSLANLTASIIGNVFGFKAVKALRLEDMRIPYAYLKTFQGPATGVVVERERLDKFGRPFLGATVKPKLGLSGKNYGRVVYEGLTGGLDFLKDDENINSQPFMRWKERFLYCMEGVNRAAAATGEVKGSYLNITAATVEQMYERAEYAHAIGSVIVMIDLVIGYTAIQSMAIWARKAEVILHLHRAGNSTYARQKNHGINFRVICKWMRMCGVDHIHAGTVVGKLEGDPLMVKGFYNSLLLTHLKINLAEGLFFDMDWASLRKCVPVASGGIHCGQMHQLLYYLGDDVVLQFGGGTIGHPDGIQSGATANRVALESMVLARNEGRDYVGEGPDILRRAASTCGPLKAALDLWKDITFDYTSTDTPDFVEVATGSR</sequence>
<comment type="function">
    <text evidence="1">RuBisCO catalyzes two reactions: the carboxylation of D-ribulose 1,5-bisphosphate, the primary event in carbon dioxide fixation, as well as the oxidative fragmentation of the pentose substrate in the photorespiration process. Both reactions occur simultaneously and in competition at the same active site.</text>
</comment>
<comment type="catalytic activity">
    <reaction evidence="1">
        <text>2 (2R)-3-phosphoglycerate + 2 H(+) = D-ribulose 1,5-bisphosphate + CO2 + H2O</text>
        <dbReference type="Rhea" id="RHEA:23124"/>
        <dbReference type="ChEBI" id="CHEBI:15377"/>
        <dbReference type="ChEBI" id="CHEBI:15378"/>
        <dbReference type="ChEBI" id="CHEBI:16526"/>
        <dbReference type="ChEBI" id="CHEBI:57870"/>
        <dbReference type="ChEBI" id="CHEBI:58272"/>
        <dbReference type="EC" id="4.1.1.39"/>
    </reaction>
</comment>
<comment type="catalytic activity">
    <reaction evidence="1">
        <text>D-ribulose 1,5-bisphosphate + O2 = 2-phosphoglycolate + (2R)-3-phosphoglycerate + 2 H(+)</text>
        <dbReference type="Rhea" id="RHEA:36631"/>
        <dbReference type="ChEBI" id="CHEBI:15378"/>
        <dbReference type="ChEBI" id="CHEBI:15379"/>
        <dbReference type="ChEBI" id="CHEBI:57870"/>
        <dbReference type="ChEBI" id="CHEBI:58033"/>
        <dbReference type="ChEBI" id="CHEBI:58272"/>
    </reaction>
</comment>
<comment type="cofactor">
    <cofactor evidence="1">
        <name>Mg(2+)</name>
        <dbReference type="ChEBI" id="CHEBI:18420"/>
    </cofactor>
    <text evidence="1">Binds 1 Mg(2+) ion per subunit.</text>
</comment>
<comment type="subunit">
    <text evidence="1">Heterohexadecamer of 8 large chains and 8 small chains.</text>
</comment>
<comment type="subcellular location">
    <subcellularLocation>
        <location>Plastid</location>
        <location>Chloroplast</location>
    </subcellularLocation>
</comment>
<comment type="miscellaneous">
    <text evidence="1">The basic functional RuBisCO is composed of a large chain homodimer in a 'head-to-tail' conformation. In form I RuBisCO this homodimer is arranged in a barrel-like tetramer with the small subunits forming a tetrameric 'cap' on each end of the 'barrel'.</text>
</comment>
<comment type="similarity">
    <text evidence="1">Belongs to the RuBisCO large chain family. Type I subfamily.</text>
</comment>
<organism>
    <name type="scientific">Ectocarpus siliculosus</name>
    <name type="common">Brown alga</name>
    <name type="synonym">Conferva siliculosa</name>
    <dbReference type="NCBI Taxonomy" id="2880"/>
    <lineage>
        <taxon>Eukaryota</taxon>
        <taxon>Sar</taxon>
        <taxon>Stramenopiles</taxon>
        <taxon>Ochrophyta</taxon>
        <taxon>PX clade</taxon>
        <taxon>Phaeophyceae</taxon>
        <taxon>Ectocarpales</taxon>
        <taxon>Ectocarpaceae</taxon>
        <taxon>Ectocarpus</taxon>
    </lineage>
</organism>
<proteinExistence type="inferred from homology"/>
<name>RBL_ECTSI</name>
<evidence type="ECO:0000255" key="1">
    <source>
        <dbReference type="HAMAP-Rule" id="MF_01338"/>
    </source>
</evidence>
<reference key="1">
    <citation type="journal article" date="1990" name="Plant Mol. Biol.">
        <title>Rubisco genes indicate a close phylogenetic relation between the plastids of Chromophyta and Rhodophyta.</title>
        <authorList>
            <person name="Valentin K.-U."/>
            <person name="Zetsche K."/>
        </authorList>
    </citation>
    <scope>NUCLEOTIDE SEQUENCE [GENOMIC DNA]</scope>
    <source>
        <strain>Dillwyn / Lyngbye</strain>
    </source>
</reference>
<protein>
    <recommendedName>
        <fullName evidence="1">Ribulose bisphosphate carboxylase large chain</fullName>
        <shortName evidence="1">RuBisCO large subunit</shortName>
        <ecNumber evidence="1">4.1.1.39</ecNumber>
    </recommendedName>
</protein>
<keyword id="KW-0113">Calvin cycle</keyword>
<keyword id="KW-0120">Carbon dioxide fixation</keyword>
<keyword id="KW-0150">Chloroplast</keyword>
<keyword id="KW-0456">Lyase</keyword>
<keyword id="KW-0460">Magnesium</keyword>
<keyword id="KW-0479">Metal-binding</keyword>
<keyword id="KW-0503">Monooxygenase</keyword>
<keyword id="KW-0560">Oxidoreductase</keyword>
<keyword id="KW-0601">Photorespiration</keyword>
<keyword id="KW-0602">Photosynthesis</keyword>
<keyword id="KW-0934">Plastid</keyword>
<geneLocation type="chloroplast"/>
<gene>
    <name evidence="1" type="primary">rbcL</name>
</gene>